<organism>
    <name type="scientific">Levilactobacillus brevis (strain ATCC 367 / BCRC 12310 / CIP 105137 / JCM 1170 / LMG 11437 / NCIMB 947 / NCTC 947)</name>
    <name type="common">Lactobacillus brevis</name>
    <dbReference type="NCBI Taxonomy" id="387344"/>
    <lineage>
        <taxon>Bacteria</taxon>
        <taxon>Bacillati</taxon>
        <taxon>Bacillota</taxon>
        <taxon>Bacilli</taxon>
        <taxon>Lactobacillales</taxon>
        <taxon>Lactobacillaceae</taxon>
        <taxon>Levilactobacillus</taxon>
    </lineage>
</organism>
<feature type="chain" id="PRO_0000345806" description="tRNA modification GTPase MnmE">
    <location>
        <begin position="1"/>
        <end position="464"/>
    </location>
</feature>
<feature type="domain" description="TrmE-type G">
    <location>
        <begin position="225"/>
        <end position="384"/>
    </location>
</feature>
<feature type="binding site" evidence="1">
    <location>
        <position position="27"/>
    </location>
    <ligand>
        <name>(6S)-5-formyl-5,6,7,8-tetrahydrofolate</name>
        <dbReference type="ChEBI" id="CHEBI:57457"/>
    </ligand>
</feature>
<feature type="binding site" evidence="1">
    <location>
        <position position="89"/>
    </location>
    <ligand>
        <name>(6S)-5-formyl-5,6,7,8-tetrahydrofolate</name>
        <dbReference type="ChEBI" id="CHEBI:57457"/>
    </ligand>
</feature>
<feature type="binding site" evidence="1">
    <location>
        <position position="128"/>
    </location>
    <ligand>
        <name>(6S)-5-formyl-5,6,7,8-tetrahydrofolate</name>
        <dbReference type="ChEBI" id="CHEBI:57457"/>
    </ligand>
</feature>
<feature type="binding site" evidence="1">
    <location>
        <begin position="235"/>
        <end position="240"/>
    </location>
    <ligand>
        <name>GTP</name>
        <dbReference type="ChEBI" id="CHEBI:37565"/>
    </ligand>
</feature>
<feature type="binding site" evidence="1">
    <location>
        <position position="235"/>
    </location>
    <ligand>
        <name>K(+)</name>
        <dbReference type="ChEBI" id="CHEBI:29103"/>
    </ligand>
</feature>
<feature type="binding site" evidence="1">
    <location>
        <position position="239"/>
    </location>
    <ligand>
        <name>Mg(2+)</name>
        <dbReference type="ChEBI" id="CHEBI:18420"/>
    </ligand>
</feature>
<feature type="binding site" evidence="1">
    <location>
        <begin position="254"/>
        <end position="260"/>
    </location>
    <ligand>
        <name>GTP</name>
        <dbReference type="ChEBI" id="CHEBI:37565"/>
    </ligand>
</feature>
<feature type="binding site" evidence="1">
    <location>
        <position position="254"/>
    </location>
    <ligand>
        <name>K(+)</name>
        <dbReference type="ChEBI" id="CHEBI:29103"/>
    </ligand>
</feature>
<feature type="binding site" evidence="1">
    <location>
        <position position="256"/>
    </location>
    <ligand>
        <name>K(+)</name>
        <dbReference type="ChEBI" id="CHEBI:29103"/>
    </ligand>
</feature>
<feature type="binding site" evidence="1">
    <location>
        <position position="259"/>
    </location>
    <ligand>
        <name>K(+)</name>
        <dbReference type="ChEBI" id="CHEBI:29103"/>
    </ligand>
</feature>
<feature type="binding site" evidence="1">
    <location>
        <position position="260"/>
    </location>
    <ligand>
        <name>Mg(2+)</name>
        <dbReference type="ChEBI" id="CHEBI:18420"/>
    </ligand>
</feature>
<feature type="binding site" evidence="1">
    <location>
        <begin position="279"/>
        <end position="282"/>
    </location>
    <ligand>
        <name>GTP</name>
        <dbReference type="ChEBI" id="CHEBI:37565"/>
    </ligand>
</feature>
<feature type="binding site" evidence="1">
    <location>
        <position position="464"/>
    </location>
    <ligand>
        <name>(6S)-5-formyl-5,6,7,8-tetrahydrofolate</name>
        <dbReference type="ChEBI" id="CHEBI:57457"/>
    </ligand>
</feature>
<gene>
    <name evidence="1" type="primary">mnmE</name>
    <name evidence="1" type="synonym">trmE</name>
    <name type="ordered locus">LVIS_2310</name>
</gene>
<reference key="1">
    <citation type="journal article" date="2006" name="Proc. Natl. Acad. Sci. U.S.A.">
        <title>Comparative genomics of the lactic acid bacteria.</title>
        <authorList>
            <person name="Makarova K.S."/>
            <person name="Slesarev A."/>
            <person name="Wolf Y.I."/>
            <person name="Sorokin A."/>
            <person name="Mirkin B."/>
            <person name="Koonin E.V."/>
            <person name="Pavlov A."/>
            <person name="Pavlova N."/>
            <person name="Karamychev V."/>
            <person name="Polouchine N."/>
            <person name="Shakhova V."/>
            <person name="Grigoriev I."/>
            <person name="Lou Y."/>
            <person name="Rohksar D."/>
            <person name="Lucas S."/>
            <person name="Huang K."/>
            <person name="Goodstein D.M."/>
            <person name="Hawkins T."/>
            <person name="Plengvidhya V."/>
            <person name="Welker D."/>
            <person name="Hughes J."/>
            <person name="Goh Y."/>
            <person name="Benson A."/>
            <person name="Baldwin K."/>
            <person name="Lee J.-H."/>
            <person name="Diaz-Muniz I."/>
            <person name="Dosti B."/>
            <person name="Smeianov V."/>
            <person name="Wechter W."/>
            <person name="Barabote R."/>
            <person name="Lorca G."/>
            <person name="Altermann E."/>
            <person name="Barrangou R."/>
            <person name="Ganesan B."/>
            <person name="Xie Y."/>
            <person name="Rawsthorne H."/>
            <person name="Tamir D."/>
            <person name="Parker C."/>
            <person name="Breidt F."/>
            <person name="Broadbent J.R."/>
            <person name="Hutkins R."/>
            <person name="O'Sullivan D."/>
            <person name="Steele J."/>
            <person name="Unlu G."/>
            <person name="Saier M.H. Jr."/>
            <person name="Klaenhammer T."/>
            <person name="Richardson P."/>
            <person name="Kozyavkin S."/>
            <person name="Weimer B.C."/>
            <person name="Mills D.A."/>
        </authorList>
    </citation>
    <scope>NUCLEOTIDE SEQUENCE [LARGE SCALE GENOMIC DNA]</scope>
    <source>
        <strain>ATCC 367 / BCRC 12310 / CIP 105137 / JCM 1170 / LMG 11437 / NCIMB 947 / NCTC 947</strain>
    </source>
</reference>
<dbReference type="EC" id="3.6.-.-" evidence="1"/>
<dbReference type="EMBL" id="CP000416">
    <property type="protein sequence ID" value="ABJ65358.1"/>
    <property type="molecule type" value="Genomic_DNA"/>
</dbReference>
<dbReference type="RefSeq" id="WP_011668975.1">
    <property type="nucleotide sequence ID" value="NC_008497.1"/>
</dbReference>
<dbReference type="SMR" id="Q03N64"/>
<dbReference type="STRING" id="387344.LVIS_2310"/>
<dbReference type="KEGG" id="lbr:LVIS_2310"/>
<dbReference type="eggNOG" id="COG0486">
    <property type="taxonomic scope" value="Bacteria"/>
</dbReference>
<dbReference type="HOGENOM" id="CLU_019624_4_1_9"/>
<dbReference type="Proteomes" id="UP000001652">
    <property type="component" value="Chromosome"/>
</dbReference>
<dbReference type="GO" id="GO:0005829">
    <property type="term" value="C:cytosol"/>
    <property type="evidence" value="ECO:0007669"/>
    <property type="project" value="TreeGrafter"/>
</dbReference>
<dbReference type="GO" id="GO:0005525">
    <property type="term" value="F:GTP binding"/>
    <property type="evidence" value="ECO:0007669"/>
    <property type="project" value="UniProtKB-UniRule"/>
</dbReference>
<dbReference type="GO" id="GO:0003924">
    <property type="term" value="F:GTPase activity"/>
    <property type="evidence" value="ECO:0007669"/>
    <property type="project" value="UniProtKB-UniRule"/>
</dbReference>
<dbReference type="GO" id="GO:0046872">
    <property type="term" value="F:metal ion binding"/>
    <property type="evidence" value="ECO:0007669"/>
    <property type="project" value="UniProtKB-KW"/>
</dbReference>
<dbReference type="GO" id="GO:0030488">
    <property type="term" value="P:tRNA methylation"/>
    <property type="evidence" value="ECO:0007669"/>
    <property type="project" value="TreeGrafter"/>
</dbReference>
<dbReference type="GO" id="GO:0002098">
    <property type="term" value="P:tRNA wobble uridine modification"/>
    <property type="evidence" value="ECO:0007669"/>
    <property type="project" value="TreeGrafter"/>
</dbReference>
<dbReference type="CDD" id="cd04164">
    <property type="entry name" value="trmE"/>
    <property type="match status" value="1"/>
</dbReference>
<dbReference type="CDD" id="cd14858">
    <property type="entry name" value="TrmE_N"/>
    <property type="match status" value="1"/>
</dbReference>
<dbReference type="FunFam" id="3.30.1360.120:FF:000003">
    <property type="entry name" value="tRNA modification GTPase MnmE"/>
    <property type="match status" value="1"/>
</dbReference>
<dbReference type="FunFam" id="3.40.50.300:FF:000494">
    <property type="entry name" value="tRNA modification GTPase MnmE"/>
    <property type="match status" value="1"/>
</dbReference>
<dbReference type="Gene3D" id="3.40.50.300">
    <property type="entry name" value="P-loop containing nucleotide triphosphate hydrolases"/>
    <property type="match status" value="1"/>
</dbReference>
<dbReference type="Gene3D" id="3.30.1360.120">
    <property type="entry name" value="Probable tRNA modification gtpase trme, domain 1"/>
    <property type="match status" value="1"/>
</dbReference>
<dbReference type="Gene3D" id="1.20.120.430">
    <property type="entry name" value="tRNA modification GTPase MnmE domain 2"/>
    <property type="match status" value="1"/>
</dbReference>
<dbReference type="HAMAP" id="MF_00379">
    <property type="entry name" value="GTPase_MnmE"/>
    <property type="match status" value="1"/>
</dbReference>
<dbReference type="InterPro" id="IPR031168">
    <property type="entry name" value="G_TrmE"/>
</dbReference>
<dbReference type="InterPro" id="IPR006073">
    <property type="entry name" value="GTP-bd"/>
</dbReference>
<dbReference type="InterPro" id="IPR018948">
    <property type="entry name" value="GTP-bd_TrmE_N"/>
</dbReference>
<dbReference type="InterPro" id="IPR004520">
    <property type="entry name" value="GTPase_MnmE"/>
</dbReference>
<dbReference type="InterPro" id="IPR027368">
    <property type="entry name" value="MnmE_dom2"/>
</dbReference>
<dbReference type="InterPro" id="IPR025867">
    <property type="entry name" value="MnmE_helical"/>
</dbReference>
<dbReference type="InterPro" id="IPR027417">
    <property type="entry name" value="P-loop_NTPase"/>
</dbReference>
<dbReference type="InterPro" id="IPR005225">
    <property type="entry name" value="Small_GTP-bd"/>
</dbReference>
<dbReference type="InterPro" id="IPR027266">
    <property type="entry name" value="TrmE/GcvT_dom1"/>
</dbReference>
<dbReference type="NCBIfam" id="TIGR00450">
    <property type="entry name" value="mnmE_trmE_thdF"/>
    <property type="match status" value="1"/>
</dbReference>
<dbReference type="NCBIfam" id="NF003661">
    <property type="entry name" value="PRK05291.1-3"/>
    <property type="match status" value="1"/>
</dbReference>
<dbReference type="NCBIfam" id="TIGR00231">
    <property type="entry name" value="small_GTP"/>
    <property type="match status" value="1"/>
</dbReference>
<dbReference type="PANTHER" id="PTHR42714">
    <property type="entry name" value="TRNA MODIFICATION GTPASE GTPBP3"/>
    <property type="match status" value="1"/>
</dbReference>
<dbReference type="PANTHER" id="PTHR42714:SF2">
    <property type="entry name" value="TRNA MODIFICATION GTPASE GTPBP3, MITOCHONDRIAL"/>
    <property type="match status" value="1"/>
</dbReference>
<dbReference type="Pfam" id="PF01926">
    <property type="entry name" value="MMR_HSR1"/>
    <property type="match status" value="1"/>
</dbReference>
<dbReference type="Pfam" id="PF12631">
    <property type="entry name" value="MnmE_helical"/>
    <property type="match status" value="1"/>
</dbReference>
<dbReference type="Pfam" id="PF10396">
    <property type="entry name" value="TrmE_N"/>
    <property type="match status" value="1"/>
</dbReference>
<dbReference type="PRINTS" id="PR00449">
    <property type="entry name" value="RASTRNSFRMNG"/>
</dbReference>
<dbReference type="SUPFAM" id="SSF52540">
    <property type="entry name" value="P-loop containing nucleoside triphosphate hydrolases"/>
    <property type="match status" value="1"/>
</dbReference>
<dbReference type="SUPFAM" id="SSF116878">
    <property type="entry name" value="TrmE connector domain"/>
    <property type="match status" value="1"/>
</dbReference>
<dbReference type="PROSITE" id="PS51709">
    <property type="entry name" value="G_TRME"/>
    <property type="match status" value="1"/>
</dbReference>
<keyword id="KW-0963">Cytoplasm</keyword>
<keyword id="KW-0342">GTP-binding</keyword>
<keyword id="KW-0378">Hydrolase</keyword>
<keyword id="KW-0460">Magnesium</keyword>
<keyword id="KW-0479">Metal-binding</keyword>
<keyword id="KW-0547">Nucleotide-binding</keyword>
<keyword id="KW-0630">Potassium</keyword>
<keyword id="KW-1185">Reference proteome</keyword>
<keyword id="KW-0819">tRNA processing</keyword>
<accession>Q03N64</accession>
<comment type="function">
    <text evidence="1">Exhibits a very high intrinsic GTPase hydrolysis rate. Involved in the addition of a carboxymethylaminomethyl (cmnm) group at the wobble position (U34) of certain tRNAs, forming tRNA-cmnm(5)s(2)U34.</text>
</comment>
<comment type="cofactor">
    <cofactor evidence="1">
        <name>K(+)</name>
        <dbReference type="ChEBI" id="CHEBI:29103"/>
    </cofactor>
    <text evidence="1">Binds 1 potassium ion per subunit.</text>
</comment>
<comment type="subunit">
    <text evidence="1">Homodimer. Heterotetramer of two MnmE and two MnmG subunits.</text>
</comment>
<comment type="subcellular location">
    <subcellularLocation>
        <location evidence="1">Cytoplasm</location>
    </subcellularLocation>
</comment>
<comment type="similarity">
    <text evidence="1">Belongs to the TRAFAC class TrmE-Era-EngA-EngB-Septin-like GTPase superfamily. TrmE GTPase family.</text>
</comment>
<sequence>MAVTTTEFDTIAAISTPPGEGGISIIRLSGEEVFQVAAKLFKGADLTQVGSHTIHYGHILDPETGDEVDEVMVTVMRAPKTYTKEDIIEINCHGGIVATNRILQLCLSYGARLAEPGEYTKRAFLNGRIDLTQAESVMDLIRAKTDKSMKVALDQLDGDLSKLIRNLRQDILDALAQVEVNIDYPEYDDVETMTTKMLLEKAHEVKQQIKTLLATAKQGKVLREGLATAIVGRPNVGKSSLLNHLLHEDKAIVTDVAGTTRDVIEEYVNVKGVPLKLIDTAGIRDTTDKVEKIGVERSRKAINTADLVMLVLNASEPLTAEDEALLTATKDTQRILILNKTDLPLQLDLAAVRQVAGDSPIIETSILQSTGMDQLEETIAHLFFDEGIESSQNTVMVTNARHIGLLHQASAALDDVQNGIAAGMPVDLVQIDMTRAWDLLGEITGDSYQDELLDQLFSQFCLGK</sequence>
<evidence type="ECO:0000255" key="1">
    <source>
        <dbReference type="HAMAP-Rule" id="MF_00379"/>
    </source>
</evidence>
<proteinExistence type="inferred from homology"/>
<protein>
    <recommendedName>
        <fullName evidence="1">tRNA modification GTPase MnmE</fullName>
        <ecNumber evidence="1">3.6.-.-</ecNumber>
    </recommendedName>
</protein>
<name>MNME_LEVBA</name>